<name>RL35_LEGPC</name>
<evidence type="ECO:0000255" key="1">
    <source>
        <dbReference type="HAMAP-Rule" id="MF_00514"/>
    </source>
</evidence>
<evidence type="ECO:0000256" key="2">
    <source>
        <dbReference type="SAM" id="MobiDB-lite"/>
    </source>
</evidence>
<evidence type="ECO:0000305" key="3"/>
<comment type="similarity">
    <text evidence="1">Belongs to the bacterial ribosomal protein bL35 family.</text>
</comment>
<gene>
    <name evidence="1" type="primary">rpmI</name>
    <name type="ordered locus">LPC_0422</name>
</gene>
<reference key="1">
    <citation type="submission" date="2006-11" db="EMBL/GenBank/DDBJ databases">
        <title>Identification and characterization of a new conjugation/ type IVA secretion system (trb/tra) of L. pneumophila Corby localized on a mobile genomic island.</title>
        <authorList>
            <person name="Gloeckner G."/>
            <person name="Albert-Weissenberger C."/>
            <person name="Weinmann E."/>
            <person name="Jacobi S."/>
            <person name="Schunder E."/>
            <person name="Steinert M."/>
            <person name="Buchrieser C."/>
            <person name="Hacker J."/>
            <person name="Heuner K."/>
        </authorList>
    </citation>
    <scope>NUCLEOTIDE SEQUENCE [LARGE SCALE GENOMIC DNA]</scope>
    <source>
        <strain>Corby</strain>
    </source>
</reference>
<sequence>MPKLKSHRGAAKRFRKTASGAIKRRGAYRNHILTKKSTKQKRHLRVEAGTLKPCDARLAERMLHGS</sequence>
<protein>
    <recommendedName>
        <fullName evidence="1">Large ribosomal subunit protein bL35</fullName>
    </recommendedName>
    <alternativeName>
        <fullName evidence="3">50S ribosomal protein L35</fullName>
    </alternativeName>
</protein>
<proteinExistence type="inferred from homology"/>
<keyword id="KW-0687">Ribonucleoprotein</keyword>
<keyword id="KW-0689">Ribosomal protein</keyword>
<organism>
    <name type="scientific">Legionella pneumophila (strain Corby)</name>
    <dbReference type="NCBI Taxonomy" id="400673"/>
    <lineage>
        <taxon>Bacteria</taxon>
        <taxon>Pseudomonadati</taxon>
        <taxon>Pseudomonadota</taxon>
        <taxon>Gammaproteobacteria</taxon>
        <taxon>Legionellales</taxon>
        <taxon>Legionellaceae</taxon>
        <taxon>Legionella</taxon>
    </lineage>
</organism>
<feature type="chain" id="PRO_1000050708" description="Large ribosomal subunit protein bL35">
    <location>
        <begin position="1"/>
        <end position="66"/>
    </location>
</feature>
<feature type="region of interest" description="Disordered" evidence="2">
    <location>
        <begin position="1"/>
        <end position="48"/>
    </location>
</feature>
<feature type="compositionally biased region" description="Basic residues" evidence="2">
    <location>
        <begin position="1"/>
        <end position="44"/>
    </location>
</feature>
<dbReference type="EMBL" id="CP000675">
    <property type="protein sequence ID" value="ABQ54411.1"/>
    <property type="molecule type" value="Genomic_DNA"/>
</dbReference>
<dbReference type="RefSeq" id="WP_011216579.1">
    <property type="nucleotide sequence ID" value="NZ_JAPMSS010000010.1"/>
</dbReference>
<dbReference type="SMR" id="A5IAL1"/>
<dbReference type="GeneID" id="57036714"/>
<dbReference type="KEGG" id="lpc:LPC_0422"/>
<dbReference type="HOGENOM" id="CLU_169643_1_1_6"/>
<dbReference type="GO" id="GO:0022625">
    <property type="term" value="C:cytosolic large ribosomal subunit"/>
    <property type="evidence" value="ECO:0007669"/>
    <property type="project" value="TreeGrafter"/>
</dbReference>
<dbReference type="GO" id="GO:0003735">
    <property type="term" value="F:structural constituent of ribosome"/>
    <property type="evidence" value="ECO:0007669"/>
    <property type="project" value="InterPro"/>
</dbReference>
<dbReference type="GO" id="GO:0006412">
    <property type="term" value="P:translation"/>
    <property type="evidence" value="ECO:0007669"/>
    <property type="project" value="UniProtKB-UniRule"/>
</dbReference>
<dbReference type="FunFam" id="4.10.410.60:FF:000001">
    <property type="entry name" value="50S ribosomal protein L35"/>
    <property type="match status" value="1"/>
</dbReference>
<dbReference type="Gene3D" id="4.10.410.60">
    <property type="match status" value="1"/>
</dbReference>
<dbReference type="HAMAP" id="MF_00514">
    <property type="entry name" value="Ribosomal_bL35"/>
    <property type="match status" value="1"/>
</dbReference>
<dbReference type="InterPro" id="IPR001706">
    <property type="entry name" value="Ribosomal_bL35"/>
</dbReference>
<dbReference type="InterPro" id="IPR021137">
    <property type="entry name" value="Ribosomal_bL35-like"/>
</dbReference>
<dbReference type="InterPro" id="IPR018265">
    <property type="entry name" value="Ribosomal_bL35_CS"/>
</dbReference>
<dbReference type="InterPro" id="IPR037229">
    <property type="entry name" value="Ribosomal_bL35_sf"/>
</dbReference>
<dbReference type="NCBIfam" id="TIGR00001">
    <property type="entry name" value="rpmI_bact"/>
    <property type="match status" value="1"/>
</dbReference>
<dbReference type="PANTHER" id="PTHR33343">
    <property type="entry name" value="54S RIBOSOMAL PROTEIN BL35M"/>
    <property type="match status" value="1"/>
</dbReference>
<dbReference type="PANTHER" id="PTHR33343:SF1">
    <property type="entry name" value="LARGE RIBOSOMAL SUBUNIT PROTEIN BL35M"/>
    <property type="match status" value="1"/>
</dbReference>
<dbReference type="Pfam" id="PF01632">
    <property type="entry name" value="Ribosomal_L35p"/>
    <property type="match status" value="1"/>
</dbReference>
<dbReference type="PRINTS" id="PR00064">
    <property type="entry name" value="RIBOSOMALL35"/>
</dbReference>
<dbReference type="SUPFAM" id="SSF143034">
    <property type="entry name" value="L35p-like"/>
    <property type="match status" value="1"/>
</dbReference>
<dbReference type="PROSITE" id="PS00936">
    <property type="entry name" value="RIBOSOMAL_L35"/>
    <property type="match status" value="1"/>
</dbReference>
<accession>A5IAL1</accession>